<reference key="1">
    <citation type="journal article" date="1992" name="Genes Dev.">
        <title>Cyclin-B homologs in Saccharomyces cerevisiae function in S phase and in G2.</title>
        <authorList>
            <person name="Richardson H."/>
            <person name="Lew D.J."/>
            <person name="Henze M."/>
            <person name="Sugimoto K."/>
            <person name="Reed S.I."/>
        </authorList>
    </citation>
    <scope>NUCLEOTIDE SEQUENCE [GENOMIC DNA]</scope>
    <source>
        <strain>ATCC 204508 / S288c</strain>
    </source>
</reference>
<reference key="2">
    <citation type="journal article" date="1992" name="Mol. Biol. Cell">
        <title>Characterization of four B-type cyclin genes of the budding yeast Saccharomyces cerevisiae.</title>
        <authorList>
            <person name="Fitch I."/>
            <person name="Dahmann C."/>
            <person name="Surana U."/>
            <person name="Amon A."/>
            <person name="Nasmyth K."/>
            <person name="Goetsch L."/>
            <person name="Byers B."/>
            <person name="Futcher B."/>
        </authorList>
    </citation>
    <scope>NUCLEOTIDE SEQUENCE [GENOMIC DNA]</scope>
</reference>
<reference key="3">
    <citation type="journal article" date="1996" name="Yeast">
        <title>Analysis of a 23 kb region on the left arm of yeast chromosome IV.</title>
        <authorList>
            <person name="Delaveau T.T.D."/>
            <person name="Blugeon C."/>
            <person name="Jacq C."/>
            <person name="Perea J."/>
        </authorList>
    </citation>
    <scope>NUCLEOTIDE SEQUENCE [GENOMIC DNA]</scope>
    <source>
        <strain>ATCC 96604 / S288c / FY1679</strain>
    </source>
</reference>
<reference key="4">
    <citation type="journal article" date="1997" name="Nature">
        <title>The nucleotide sequence of Saccharomyces cerevisiae chromosome IV.</title>
        <authorList>
            <person name="Jacq C."/>
            <person name="Alt-Moerbe J."/>
            <person name="Andre B."/>
            <person name="Arnold W."/>
            <person name="Bahr A."/>
            <person name="Ballesta J.P.G."/>
            <person name="Bargues M."/>
            <person name="Baron L."/>
            <person name="Becker A."/>
            <person name="Biteau N."/>
            <person name="Bloecker H."/>
            <person name="Blugeon C."/>
            <person name="Boskovic J."/>
            <person name="Brandt P."/>
            <person name="Brueckner M."/>
            <person name="Buitrago M.J."/>
            <person name="Coster F."/>
            <person name="Delaveau T."/>
            <person name="del Rey F."/>
            <person name="Dujon B."/>
            <person name="Eide L.G."/>
            <person name="Garcia-Cantalejo J.M."/>
            <person name="Goffeau A."/>
            <person name="Gomez-Peris A."/>
            <person name="Granotier C."/>
            <person name="Hanemann V."/>
            <person name="Hankeln T."/>
            <person name="Hoheisel J.D."/>
            <person name="Jaeger W."/>
            <person name="Jimenez A."/>
            <person name="Jonniaux J.-L."/>
            <person name="Kraemer C."/>
            <person name="Kuester H."/>
            <person name="Laamanen P."/>
            <person name="Legros Y."/>
            <person name="Louis E.J."/>
            <person name="Moeller-Rieker S."/>
            <person name="Monnet A."/>
            <person name="Moro M."/>
            <person name="Mueller-Auer S."/>
            <person name="Nussbaumer B."/>
            <person name="Paricio N."/>
            <person name="Paulin L."/>
            <person name="Perea J."/>
            <person name="Perez-Alonso M."/>
            <person name="Perez-Ortin J.E."/>
            <person name="Pohl T.M."/>
            <person name="Prydz H."/>
            <person name="Purnelle B."/>
            <person name="Rasmussen S.W."/>
            <person name="Remacha M.A."/>
            <person name="Revuelta J.L."/>
            <person name="Rieger M."/>
            <person name="Salom D."/>
            <person name="Saluz H.P."/>
            <person name="Saiz J.E."/>
            <person name="Saren A.-M."/>
            <person name="Schaefer M."/>
            <person name="Scharfe M."/>
            <person name="Schmidt E.R."/>
            <person name="Schneider C."/>
            <person name="Scholler P."/>
            <person name="Schwarz S."/>
            <person name="Soler-Mira A."/>
            <person name="Urrestarazu L.A."/>
            <person name="Verhasselt P."/>
            <person name="Vissers S."/>
            <person name="Voet M."/>
            <person name="Volckaert G."/>
            <person name="Wagner G."/>
            <person name="Wambutt R."/>
            <person name="Wedler E."/>
            <person name="Wedler H."/>
            <person name="Woelfl S."/>
            <person name="Harris D.E."/>
            <person name="Bowman S."/>
            <person name="Brown D."/>
            <person name="Churcher C.M."/>
            <person name="Connor R."/>
            <person name="Dedman K."/>
            <person name="Gentles S."/>
            <person name="Hamlin N."/>
            <person name="Hunt S."/>
            <person name="Jones L."/>
            <person name="McDonald S."/>
            <person name="Murphy L.D."/>
            <person name="Niblett D."/>
            <person name="Odell C."/>
            <person name="Oliver K."/>
            <person name="Rajandream M.A."/>
            <person name="Richards C."/>
            <person name="Shore L."/>
            <person name="Walsh S.V."/>
            <person name="Barrell B.G."/>
            <person name="Dietrich F.S."/>
            <person name="Mulligan J.T."/>
            <person name="Allen E."/>
            <person name="Araujo R."/>
            <person name="Aviles E."/>
            <person name="Berno A."/>
            <person name="Carpenter J."/>
            <person name="Chen E."/>
            <person name="Cherry J.M."/>
            <person name="Chung E."/>
            <person name="Duncan M."/>
            <person name="Hunicke-Smith S."/>
            <person name="Hyman R.W."/>
            <person name="Komp C."/>
            <person name="Lashkari D."/>
            <person name="Lew H."/>
            <person name="Lin D."/>
            <person name="Mosedale D."/>
            <person name="Nakahara K."/>
            <person name="Namath A."/>
            <person name="Oefner P."/>
            <person name="Oh C."/>
            <person name="Petel F.X."/>
            <person name="Roberts D."/>
            <person name="Schramm S."/>
            <person name="Schroeder M."/>
            <person name="Shogren T."/>
            <person name="Shroff N."/>
            <person name="Winant A."/>
            <person name="Yelton M.A."/>
            <person name="Botstein D."/>
            <person name="Davis R.W."/>
            <person name="Johnston M."/>
            <person name="Andrews S."/>
            <person name="Brinkman R."/>
            <person name="Cooper J."/>
            <person name="Ding H."/>
            <person name="Du Z."/>
            <person name="Favello A."/>
            <person name="Fulton L."/>
            <person name="Gattung S."/>
            <person name="Greco T."/>
            <person name="Hallsworth K."/>
            <person name="Hawkins J."/>
            <person name="Hillier L.W."/>
            <person name="Jier M."/>
            <person name="Johnson D."/>
            <person name="Johnston L."/>
            <person name="Kirsten J."/>
            <person name="Kucaba T."/>
            <person name="Langston Y."/>
            <person name="Latreille P."/>
            <person name="Le T."/>
            <person name="Mardis E."/>
            <person name="Menezes S."/>
            <person name="Miller N."/>
            <person name="Nhan M."/>
            <person name="Pauley A."/>
            <person name="Peluso D."/>
            <person name="Rifkin L."/>
            <person name="Riles L."/>
            <person name="Taich A."/>
            <person name="Trevaskis E."/>
            <person name="Vignati D."/>
            <person name="Wilcox L."/>
            <person name="Wohldman P."/>
            <person name="Vaudin M."/>
            <person name="Wilson R."/>
            <person name="Waterston R."/>
            <person name="Albermann K."/>
            <person name="Hani J."/>
            <person name="Heumann K."/>
            <person name="Kleine K."/>
            <person name="Mewes H.-W."/>
            <person name="Zollner A."/>
            <person name="Zaccaria P."/>
        </authorList>
    </citation>
    <scope>NUCLEOTIDE SEQUENCE [LARGE SCALE GENOMIC DNA]</scope>
    <source>
        <strain>ATCC 204508 / S288c</strain>
    </source>
</reference>
<reference key="5">
    <citation type="journal article" date="2014" name="G3 (Bethesda)">
        <title>The reference genome sequence of Saccharomyces cerevisiae: Then and now.</title>
        <authorList>
            <person name="Engel S.R."/>
            <person name="Dietrich F.S."/>
            <person name="Fisk D.G."/>
            <person name="Binkley G."/>
            <person name="Balakrishnan R."/>
            <person name="Costanzo M.C."/>
            <person name="Dwight S.S."/>
            <person name="Hitz B.C."/>
            <person name="Karra K."/>
            <person name="Nash R.S."/>
            <person name="Weng S."/>
            <person name="Wong E.D."/>
            <person name="Lloyd P."/>
            <person name="Skrzypek M.S."/>
            <person name="Miyasato S.R."/>
            <person name="Simison M."/>
            <person name="Cherry J.M."/>
        </authorList>
    </citation>
    <scope>GENOME REANNOTATION</scope>
    <source>
        <strain>ATCC 204508 / S288c</strain>
    </source>
</reference>
<reference key="6">
    <citation type="journal article" date="2007" name="Genome Res.">
        <title>Approaching a complete repository of sequence-verified protein-encoding clones for Saccharomyces cerevisiae.</title>
        <authorList>
            <person name="Hu Y."/>
            <person name="Rolfs A."/>
            <person name="Bhullar B."/>
            <person name="Murthy T.V.S."/>
            <person name="Zhu C."/>
            <person name="Berger M.F."/>
            <person name="Camargo A.A."/>
            <person name="Kelley F."/>
            <person name="McCarron S."/>
            <person name="Jepson D."/>
            <person name="Richardson A."/>
            <person name="Raphael J."/>
            <person name="Moreira D."/>
            <person name="Taycher E."/>
            <person name="Zuo D."/>
            <person name="Mohr S."/>
            <person name="Kane M.F."/>
            <person name="Williamson J."/>
            <person name="Simpson A.J.G."/>
            <person name="Bulyk M.L."/>
            <person name="Harlow E."/>
            <person name="Marsischky G."/>
            <person name="Kolodner R.D."/>
            <person name="LaBaer J."/>
        </authorList>
    </citation>
    <scope>NUCLEOTIDE SEQUENCE [GENOMIC DNA]</scope>
    <source>
        <strain>ATCC 204508 / S288c</strain>
    </source>
</reference>
<reference key="7">
    <citation type="journal article" date="1991" name="Cell">
        <title>The role of CDC28 and cyclins during mitosis in the budding yeast S. cerevisiae.</title>
        <authorList>
            <person name="Surana U."/>
            <person name="Robitsch H."/>
            <person name="Price C."/>
            <person name="Schuster T."/>
            <person name="Fitch I."/>
            <person name="Futcher A.B."/>
            <person name="Nasmyth K."/>
        </authorList>
    </citation>
    <scope>NUCLEOTIDE SEQUENCE [GENOMIC DNA] OF 194-383</scope>
</reference>
<reference key="8">
    <citation type="journal article" date="2003" name="Nature">
        <title>Global analysis of protein expression in yeast.</title>
        <authorList>
            <person name="Ghaemmaghami S."/>
            <person name="Huh W.-K."/>
            <person name="Bower K."/>
            <person name="Howson R.W."/>
            <person name="Belle A."/>
            <person name="Dephoure N."/>
            <person name="O'Shea E.K."/>
            <person name="Weissman J.S."/>
        </authorList>
    </citation>
    <scope>LEVEL OF PROTEIN EXPRESSION [LARGE SCALE ANALYSIS]</scope>
</reference>
<accession>P24870</accession>
<accession>D6VRJ5</accession>
<keyword id="KW-0131">Cell cycle</keyword>
<keyword id="KW-0132">Cell division</keyword>
<keyword id="KW-0195">Cyclin</keyword>
<keyword id="KW-0498">Mitosis</keyword>
<keyword id="KW-1185">Reference proteome</keyword>
<sequence>MHHNSQSLSSGHIRSPEDENVAPIGNLKHRTGSLSHISSAHPRVALSDVTNIVATNSSNNSISKPKVAPIKERLDSAAIIEEERLDANSVAQRKEADHNDLLTDREQEEPVEDDGESEEDEEEDQEPLLLQHYASDTLVWEHAFRTYYRTTLDPNDDDVYDVVMVAELSNEIFEYMRKLEDLYKPNPYYMDKQPELRWSFRSTLIDWIVQVHEKFQLLPETLYLCINIIDRYLCKEVVPVNKFQLVGAASLFIAAKYEEINCPTIKDFVYMSENCYSRNDLLDAERTILNGLEFELGWPGPMSFLRRISKADDYEHDTRTLAKYLLESTIMDHRLVSAQPSWLAAGAYFLSKIILGQNQWSLAHVYYSNYTQEQILPLATIILENCRYASKRHNAIWRKYSSRRYLHSSQIVAKWIALAEHRVERSN</sequence>
<gene>
    <name type="primary">CLB3</name>
    <name type="ordered locus">YDL155W</name>
    <name type="ORF">D1539</name>
</gene>
<comment type="function">
    <text>Essential for the control of the cell cycle at the G2/M (mitosis) transition. Interacts with the CDC2 protein kinase to form MPF. G2/M cyclins accumulate steadily during G2 and are abruptly destroyed at mitosis.</text>
</comment>
<comment type="interaction">
    <interactant intactId="EBI-4522">
        <id>P24870</id>
    </interactant>
    <interactant intactId="EBI-4192">
        <id>Q00684</id>
        <label>CDC14</label>
    </interactant>
    <organismsDiffer>false</organismsDiffer>
    <experiments>2</experiments>
</comment>
<comment type="interaction">
    <interactant intactId="EBI-4522">
        <id>P24870</id>
    </interactant>
    <interactant intactId="EBI-4746">
        <id>P20486</id>
        <label>CKS1</label>
    </interactant>
    <organismsDiffer>false</organismsDiffer>
    <experiments>4</experiments>
</comment>
<comment type="miscellaneous">
    <text evidence="2">Present with 892 molecules/cell in log phase SD medium.</text>
</comment>
<comment type="similarity">
    <text evidence="3">Belongs to the cyclin family. Cyclin AB subfamily.</text>
</comment>
<protein>
    <recommendedName>
        <fullName>G2/mitotic-specific cyclin-3</fullName>
    </recommendedName>
</protein>
<feature type="chain" id="PRO_0000080405" description="G2/mitotic-specific cyclin-3">
    <location>
        <begin position="1"/>
        <end position="427"/>
    </location>
</feature>
<feature type="region of interest" description="Disordered" evidence="1">
    <location>
        <begin position="1"/>
        <end position="29"/>
    </location>
</feature>
<feature type="region of interest" description="Disordered" evidence="1">
    <location>
        <begin position="89"/>
        <end position="126"/>
    </location>
</feature>
<feature type="compositionally biased region" description="Polar residues" evidence="1">
    <location>
        <begin position="1"/>
        <end position="12"/>
    </location>
</feature>
<feature type="compositionally biased region" description="Basic and acidic residues" evidence="1">
    <location>
        <begin position="89"/>
        <end position="105"/>
    </location>
</feature>
<feature type="compositionally biased region" description="Acidic residues" evidence="1">
    <location>
        <begin position="106"/>
        <end position="126"/>
    </location>
</feature>
<feature type="sequence conflict" description="In Ref. 1; CAA49201." evidence="3" ref="1">
    <original>D</original>
    <variation>R</variation>
    <location>
        <position position="48"/>
    </location>
</feature>
<organism>
    <name type="scientific">Saccharomyces cerevisiae (strain ATCC 204508 / S288c)</name>
    <name type="common">Baker's yeast</name>
    <dbReference type="NCBI Taxonomy" id="559292"/>
    <lineage>
        <taxon>Eukaryota</taxon>
        <taxon>Fungi</taxon>
        <taxon>Dikarya</taxon>
        <taxon>Ascomycota</taxon>
        <taxon>Saccharomycotina</taxon>
        <taxon>Saccharomycetes</taxon>
        <taxon>Saccharomycetales</taxon>
        <taxon>Saccharomycetaceae</taxon>
        <taxon>Saccharomyces</taxon>
    </lineage>
</organism>
<name>CG23_YEAST</name>
<dbReference type="EMBL" id="X69425">
    <property type="protein sequence ID" value="CAA49201.1"/>
    <property type="molecule type" value="Genomic_DNA"/>
</dbReference>
<dbReference type="EMBL" id="M80302">
    <property type="protein sequence ID" value="AAA34765.1"/>
    <property type="molecule type" value="Genomic_DNA"/>
</dbReference>
<dbReference type="EMBL" id="X97751">
    <property type="protein sequence ID" value="CAA66336.1"/>
    <property type="molecule type" value="Genomic_DNA"/>
</dbReference>
<dbReference type="EMBL" id="Z74203">
    <property type="protein sequence ID" value="CAA98729.1"/>
    <property type="molecule type" value="Genomic_DNA"/>
</dbReference>
<dbReference type="EMBL" id="AY692856">
    <property type="protein sequence ID" value="AAT92875.1"/>
    <property type="molecule type" value="Genomic_DNA"/>
</dbReference>
<dbReference type="EMBL" id="BK006938">
    <property type="protein sequence ID" value="DAA11705.1"/>
    <property type="molecule type" value="Genomic_DNA"/>
</dbReference>
<dbReference type="PIR" id="A60048">
    <property type="entry name" value="A60048"/>
</dbReference>
<dbReference type="RefSeq" id="NP_010126.1">
    <property type="nucleotide sequence ID" value="NM_001180215.1"/>
</dbReference>
<dbReference type="SMR" id="P24870"/>
<dbReference type="BioGRID" id="31908">
    <property type="interactions" value="168"/>
</dbReference>
<dbReference type="ComplexPortal" id="CPX-336">
    <property type="entry name" value="CLB3-CDC28 kinase complex"/>
</dbReference>
<dbReference type="DIP" id="DIP-1266N"/>
<dbReference type="FunCoup" id="P24870">
    <property type="interactions" value="2291"/>
</dbReference>
<dbReference type="IntAct" id="P24870">
    <property type="interactions" value="33"/>
</dbReference>
<dbReference type="MINT" id="P24870"/>
<dbReference type="STRING" id="4932.YDL155W"/>
<dbReference type="iPTMnet" id="P24870"/>
<dbReference type="PaxDb" id="4932-YDL155W"/>
<dbReference type="PeptideAtlas" id="P24870"/>
<dbReference type="EnsemblFungi" id="YDL155W_mRNA">
    <property type="protein sequence ID" value="YDL155W"/>
    <property type="gene ID" value="YDL155W"/>
</dbReference>
<dbReference type="GeneID" id="851400"/>
<dbReference type="KEGG" id="sce:YDL155W"/>
<dbReference type="AGR" id="SGD:S000002314"/>
<dbReference type="SGD" id="S000002314">
    <property type="gene designation" value="CLB3"/>
</dbReference>
<dbReference type="VEuPathDB" id="FungiDB:YDL155W"/>
<dbReference type="eggNOG" id="KOG0653">
    <property type="taxonomic scope" value="Eukaryota"/>
</dbReference>
<dbReference type="GeneTree" id="ENSGT00940000168350"/>
<dbReference type="HOGENOM" id="CLU_020695_12_1_1"/>
<dbReference type="InParanoid" id="P24870"/>
<dbReference type="OMA" id="PRYMDFQ"/>
<dbReference type="OrthoDB" id="5590282at2759"/>
<dbReference type="BioCyc" id="YEAST:G3O-29550-MONOMER"/>
<dbReference type="BioGRID-ORCS" id="851400">
    <property type="hits" value="0 hits in 10 CRISPR screens"/>
</dbReference>
<dbReference type="PRO" id="PR:P24870"/>
<dbReference type="Proteomes" id="UP000002311">
    <property type="component" value="Chromosome IV"/>
</dbReference>
<dbReference type="RNAct" id="P24870">
    <property type="molecule type" value="protein"/>
</dbReference>
<dbReference type="GO" id="GO:0000307">
    <property type="term" value="C:cyclin-dependent protein kinase holoenzyme complex"/>
    <property type="evidence" value="ECO:0000250"/>
    <property type="project" value="ComplexPortal"/>
</dbReference>
<dbReference type="GO" id="GO:0005737">
    <property type="term" value="C:cytoplasm"/>
    <property type="evidence" value="ECO:0000314"/>
    <property type="project" value="SGD"/>
</dbReference>
<dbReference type="GO" id="GO:0005811">
    <property type="term" value="C:lipid droplet"/>
    <property type="evidence" value="ECO:0000314"/>
    <property type="project" value="SGD"/>
</dbReference>
<dbReference type="GO" id="GO:0005815">
    <property type="term" value="C:microtubule organizing center"/>
    <property type="evidence" value="ECO:0000318"/>
    <property type="project" value="GO_Central"/>
</dbReference>
<dbReference type="GO" id="GO:0005634">
    <property type="term" value="C:nucleus"/>
    <property type="evidence" value="ECO:0000314"/>
    <property type="project" value="SGD"/>
</dbReference>
<dbReference type="GO" id="GO:0016538">
    <property type="term" value="F:cyclin-dependent protein serine/threonine kinase regulator activity"/>
    <property type="evidence" value="ECO:0000315"/>
    <property type="project" value="SGD"/>
</dbReference>
<dbReference type="GO" id="GO:0051301">
    <property type="term" value="P:cell division"/>
    <property type="evidence" value="ECO:0007669"/>
    <property type="project" value="UniProtKB-KW"/>
</dbReference>
<dbReference type="GO" id="GO:0000082">
    <property type="term" value="P:G1/S transition of mitotic cell cycle"/>
    <property type="evidence" value="ECO:0000318"/>
    <property type="project" value="GO_Central"/>
</dbReference>
<dbReference type="GO" id="GO:0000086">
    <property type="term" value="P:G2/M transition of mitotic cell cycle"/>
    <property type="evidence" value="ECO:0000315"/>
    <property type="project" value="SGD"/>
</dbReference>
<dbReference type="GO" id="GO:0007135">
    <property type="term" value="P:meiosis II"/>
    <property type="evidence" value="ECO:0000314"/>
    <property type="project" value="SGD"/>
</dbReference>
<dbReference type="GO" id="GO:0010696">
    <property type="term" value="P:positive regulation of mitotic spindle pole body separation"/>
    <property type="evidence" value="ECO:0000316"/>
    <property type="project" value="SGD"/>
</dbReference>
<dbReference type="GO" id="GO:1901673">
    <property type="term" value="P:regulation of mitotic spindle assembly"/>
    <property type="evidence" value="ECO:0000316"/>
    <property type="project" value="SGD"/>
</dbReference>
<dbReference type="CDD" id="cd20568">
    <property type="entry name" value="CYCLIN_CLBs_yeast_rpt1"/>
    <property type="match status" value="1"/>
</dbReference>
<dbReference type="CDD" id="cd20512">
    <property type="entry name" value="CYCLIN_CLBs_yeast_rpt2"/>
    <property type="match status" value="1"/>
</dbReference>
<dbReference type="FunFam" id="1.10.472.10:FF:000001">
    <property type="entry name" value="G2/mitotic-specific cyclin"/>
    <property type="match status" value="1"/>
</dbReference>
<dbReference type="Gene3D" id="1.10.472.10">
    <property type="entry name" value="Cyclin-like"/>
    <property type="match status" value="2"/>
</dbReference>
<dbReference type="InterPro" id="IPR039361">
    <property type="entry name" value="Cyclin"/>
</dbReference>
<dbReference type="InterPro" id="IPR013763">
    <property type="entry name" value="Cyclin-like_dom"/>
</dbReference>
<dbReference type="InterPro" id="IPR036915">
    <property type="entry name" value="Cyclin-like_sf"/>
</dbReference>
<dbReference type="InterPro" id="IPR046965">
    <property type="entry name" value="Cyclin_A/B-like"/>
</dbReference>
<dbReference type="InterPro" id="IPR004367">
    <property type="entry name" value="Cyclin_C-dom"/>
</dbReference>
<dbReference type="InterPro" id="IPR006671">
    <property type="entry name" value="Cyclin_N"/>
</dbReference>
<dbReference type="InterPro" id="IPR048258">
    <property type="entry name" value="Cyclins_cyclin-box"/>
</dbReference>
<dbReference type="PANTHER" id="PTHR10177">
    <property type="entry name" value="CYCLINS"/>
    <property type="match status" value="1"/>
</dbReference>
<dbReference type="Pfam" id="PF02984">
    <property type="entry name" value="Cyclin_C"/>
    <property type="match status" value="1"/>
</dbReference>
<dbReference type="Pfam" id="PF00134">
    <property type="entry name" value="Cyclin_N"/>
    <property type="match status" value="1"/>
</dbReference>
<dbReference type="PIRSF" id="PIRSF001771">
    <property type="entry name" value="Cyclin_A_B_D_E"/>
    <property type="match status" value="1"/>
</dbReference>
<dbReference type="SMART" id="SM00385">
    <property type="entry name" value="CYCLIN"/>
    <property type="match status" value="2"/>
</dbReference>
<dbReference type="SMART" id="SM01332">
    <property type="entry name" value="Cyclin_C"/>
    <property type="match status" value="1"/>
</dbReference>
<dbReference type="SUPFAM" id="SSF47954">
    <property type="entry name" value="Cyclin-like"/>
    <property type="match status" value="2"/>
</dbReference>
<dbReference type="PROSITE" id="PS00292">
    <property type="entry name" value="CYCLINS"/>
    <property type="match status" value="1"/>
</dbReference>
<proteinExistence type="evidence at protein level"/>
<evidence type="ECO:0000256" key="1">
    <source>
        <dbReference type="SAM" id="MobiDB-lite"/>
    </source>
</evidence>
<evidence type="ECO:0000269" key="2">
    <source>
    </source>
</evidence>
<evidence type="ECO:0000305" key="3"/>